<protein>
    <recommendedName>
        <fullName>Putative ankyrin repeat protein R858</fullName>
    </recommendedName>
</protein>
<feature type="chain" id="PRO_0000067216" description="Putative ankyrin repeat protein R858">
    <location>
        <begin position="1"/>
        <end position="424"/>
    </location>
</feature>
<feature type="repeat" description="ANK 1">
    <location>
        <begin position="115"/>
        <end position="144"/>
    </location>
</feature>
<feature type="repeat" description="ANK 2">
    <location>
        <begin position="147"/>
        <end position="177"/>
    </location>
</feature>
<feature type="repeat" description="ANK 3">
    <location>
        <begin position="184"/>
        <end position="215"/>
    </location>
</feature>
<feature type="repeat" description="ANK 4">
    <location>
        <begin position="219"/>
        <end position="252"/>
    </location>
</feature>
<organismHost>
    <name type="scientific">Acanthamoeba polyphaga</name>
    <name type="common">Amoeba</name>
    <dbReference type="NCBI Taxonomy" id="5757"/>
</organismHost>
<keyword id="KW-0040">ANK repeat</keyword>
<keyword id="KW-1185">Reference proteome</keyword>
<keyword id="KW-0677">Repeat</keyword>
<proteinExistence type="predicted"/>
<name>YR858_MIMIV</name>
<organism>
    <name type="scientific">Acanthamoeba polyphaga mimivirus</name>
    <name type="common">APMV</name>
    <dbReference type="NCBI Taxonomy" id="212035"/>
    <lineage>
        <taxon>Viruses</taxon>
        <taxon>Varidnaviria</taxon>
        <taxon>Bamfordvirae</taxon>
        <taxon>Nucleocytoviricota</taxon>
        <taxon>Megaviricetes</taxon>
        <taxon>Imitervirales</taxon>
        <taxon>Mimiviridae</taxon>
        <taxon>Megamimivirinae</taxon>
        <taxon>Mimivirus</taxon>
        <taxon>Mimivirus bradfordmassiliense</taxon>
    </lineage>
</organism>
<reference key="1">
    <citation type="journal article" date="2004" name="Science">
        <title>The 1.2-megabase genome sequence of Mimivirus.</title>
        <authorList>
            <person name="Raoult D."/>
            <person name="Audic S."/>
            <person name="Robert C."/>
            <person name="Abergel C."/>
            <person name="Renesto P."/>
            <person name="Ogata H."/>
            <person name="La Scola B."/>
            <person name="Susan M."/>
            <person name="Claverie J.-M."/>
        </authorList>
    </citation>
    <scope>NUCLEOTIDE SEQUENCE [LARGE SCALE GENOMIC DNA]</scope>
    <source>
        <strain>Rowbotham-Bradford</strain>
    </source>
</reference>
<gene>
    <name type="ordered locus">MIMI_R858</name>
</gene>
<accession>Q5UQQ5</accession>
<sequence length="424" mass="50046">MCVSKKKLASKKIPTNNSSNNPLKNEIIENILENDFIKDITMEFNGISFPVYSEFERTYQQLFGDYKTKIRCQDYLFLIRHRKLYNGGLHKIQIANYIKNHFITRYDFDKISMTHLMCACIYSINDSNLELVKLLVNNFNFTKRDNTDHTALSYAFKNPGNIKIIGFLLNYIESDYFEIDQNIINDSLIYWSKTDYLPCIEMAKLLIKAEASINYKDRTGSTILINIINNKNYYNITDLVKFLLTEGVDIHESTTICPDNNVVKEKWTTSIGSKLIESVKFEINGEQIFPSYYGDYDESCRKPKYSIMNHLIKRYCWDNNKRIISMFYDYGYRELPNTTNTSILEFTKQIVNDIEFRESYFRKFKPDLIEKQREIVYKPGSVRSEIIKLNWEINSGQTLNPNKYIFDYFGINNLIELEKMINDV</sequence>
<dbReference type="EMBL" id="AY653733">
    <property type="protein sequence ID" value="AAV51116.1"/>
    <property type="molecule type" value="Genomic_DNA"/>
</dbReference>
<dbReference type="SMR" id="Q5UQQ5"/>
<dbReference type="KEGG" id="vg:9925519"/>
<dbReference type="OrthoDB" id="8027at10239"/>
<dbReference type="Proteomes" id="UP000001134">
    <property type="component" value="Genome"/>
</dbReference>
<dbReference type="Gene3D" id="1.25.40.20">
    <property type="entry name" value="Ankyrin repeat-containing domain"/>
    <property type="match status" value="1"/>
</dbReference>
<dbReference type="InterPro" id="IPR002110">
    <property type="entry name" value="Ankyrin_rpt"/>
</dbReference>
<dbReference type="InterPro" id="IPR036770">
    <property type="entry name" value="Ankyrin_rpt-contain_sf"/>
</dbReference>
<dbReference type="Pfam" id="PF12796">
    <property type="entry name" value="Ank_2"/>
    <property type="match status" value="1"/>
</dbReference>
<dbReference type="SUPFAM" id="SSF48403">
    <property type="entry name" value="Ankyrin repeat"/>
    <property type="match status" value="1"/>
</dbReference>
<dbReference type="PROSITE" id="PS50297">
    <property type="entry name" value="ANK_REP_REGION"/>
    <property type="match status" value="1"/>
</dbReference>